<sequence length="323" mass="37058">MSSKQHCVKLNDGHLIPALGFGTYKPKEVPKSKSLEAACLALDVGYRHVDTAYAYQVEEEIGQAIQSKIKAGVVKREDLFITTKLWCTCFRPELVKPALEKSLKKLQLDYVDLYIMHYPVPMKSGDNDFPVNEQGKSLLDTVDFCDTWERLEECKDAGLVKSIGVSNFNHRQLERILNKPGLKYKPVCNQVECHLYLNQRKLLDYCESKDIVLVAYGALGTQRYKEWVDQNSPVLLNDPVLCDVAKKNKRSPALIALRYLIQRGIVPLAQSFKENEMRENLQVFGFQLSPEDMKTLDGLNKNFRYLPAEFLVDHPEYPFVEEY</sequence>
<evidence type="ECO:0000250" key="1"/>
<evidence type="ECO:0000269" key="2">
    <source ref="6"/>
</evidence>
<evidence type="ECO:0000305" key="3"/>
<evidence type="ECO:0007829" key="4">
    <source>
        <dbReference type="PDB" id="5UXF"/>
    </source>
</evidence>
<evidence type="ECO:0007829" key="5">
    <source>
        <dbReference type="PDB" id="6M7K"/>
    </source>
</evidence>
<proteinExistence type="evidence at protein level"/>
<dbReference type="EC" id="1.1.1.-"/>
<dbReference type="EMBL" id="AB027125">
    <property type="protein sequence ID" value="BAA86850.1"/>
    <property type="molecule type" value="mRNA"/>
</dbReference>
<dbReference type="EMBL" id="AK008949">
    <property type="protein sequence ID" value="BAB25986.1"/>
    <property type="molecule type" value="mRNA"/>
</dbReference>
<dbReference type="EMBL" id="BC021937">
    <property type="protein sequence ID" value="AAH21937.1"/>
    <property type="molecule type" value="mRNA"/>
</dbReference>
<dbReference type="CCDS" id="CCDS26220.1"/>
<dbReference type="RefSeq" id="NP_038806.2">
    <property type="nucleotide sequence ID" value="NM_013778.3"/>
</dbReference>
<dbReference type="PDB" id="3LN3">
    <property type="method" value="X-ray"/>
    <property type="resolution" value="1.18 A"/>
    <property type="chains" value="A=1-323"/>
</dbReference>
<dbReference type="PDB" id="5UXF">
    <property type="method" value="X-ray"/>
    <property type="resolution" value="1.50 A"/>
    <property type="chains" value="A=1-323"/>
</dbReference>
<dbReference type="PDB" id="6M7K">
    <property type="method" value="X-ray"/>
    <property type="resolution" value="1.10 A"/>
    <property type="chains" value="A=3-323"/>
</dbReference>
<dbReference type="PDBsum" id="3LN3"/>
<dbReference type="PDBsum" id="5UXF"/>
<dbReference type="PDBsum" id="6M7K"/>
<dbReference type="SMR" id="Q8VC28"/>
<dbReference type="FunCoup" id="Q8VC28">
    <property type="interactions" value="199"/>
</dbReference>
<dbReference type="STRING" id="10090.ENSMUSP00000021634"/>
<dbReference type="GlyGen" id="Q8VC28">
    <property type="glycosylation" value="1 site, 1 O-linked glycan (1 site)"/>
</dbReference>
<dbReference type="iPTMnet" id="Q8VC28"/>
<dbReference type="PhosphoSitePlus" id="Q8VC28"/>
<dbReference type="SwissPalm" id="Q8VC28"/>
<dbReference type="jPOST" id="Q8VC28"/>
<dbReference type="PaxDb" id="10090-ENSMUSP00000021634"/>
<dbReference type="ProteomicsDB" id="296009"/>
<dbReference type="Pumba" id="Q8VC28"/>
<dbReference type="DNASU" id="27384"/>
<dbReference type="Ensembl" id="ENSMUST00000021634.4">
    <property type="protein sequence ID" value="ENSMUSP00000021634.3"/>
    <property type="gene ID" value="ENSMUSG00000021213.13"/>
</dbReference>
<dbReference type="GeneID" id="27384"/>
<dbReference type="KEGG" id="mmu:27384"/>
<dbReference type="UCSC" id="uc007pjl.2">
    <property type="organism name" value="mouse"/>
</dbReference>
<dbReference type="AGR" id="MGI:1351662"/>
<dbReference type="CTD" id="27384"/>
<dbReference type="MGI" id="MGI:1351662">
    <property type="gene designation" value="Akr1c13"/>
</dbReference>
<dbReference type="VEuPathDB" id="HostDB:ENSMUSG00000021213"/>
<dbReference type="eggNOG" id="KOG1577">
    <property type="taxonomic scope" value="Eukaryota"/>
</dbReference>
<dbReference type="GeneTree" id="ENSGT00940000162368"/>
<dbReference type="HOGENOM" id="CLU_023205_0_0_1"/>
<dbReference type="InParanoid" id="Q8VC28"/>
<dbReference type="OMA" id="TAWYYGT"/>
<dbReference type="OrthoDB" id="416253at2759"/>
<dbReference type="PhylomeDB" id="Q8VC28"/>
<dbReference type="TreeFam" id="TF106492"/>
<dbReference type="BioGRID-ORCS" id="27384">
    <property type="hits" value="2 hits in 76 CRISPR screens"/>
</dbReference>
<dbReference type="ChiTaRS" id="Akr1c13">
    <property type="organism name" value="mouse"/>
</dbReference>
<dbReference type="EvolutionaryTrace" id="Q8VC28"/>
<dbReference type="PRO" id="PR:Q8VC28"/>
<dbReference type="Proteomes" id="UP000000589">
    <property type="component" value="Chromosome 13"/>
</dbReference>
<dbReference type="RNAct" id="Q8VC28">
    <property type="molecule type" value="protein"/>
</dbReference>
<dbReference type="Bgee" id="ENSMUSG00000021213">
    <property type="expression patterns" value="Expressed in epithelium of small intestine and 152 other cell types or tissues"/>
</dbReference>
<dbReference type="ExpressionAtlas" id="Q8VC28">
    <property type="expression patterns" value="baseline and differential"/>
</dbReference>
<dbReference type="GO" id="GO:0004033">
    <property type="term" value="F:aldo-keto reductase (NADPH) activity"/>
    <property type="evidence" value="ECO:0000250"/>
    <property type="project" value="MGI"/>
</dbReference>
<dbReference type="GO" id="GO:0006805">
    <property type="term" value="P:xenobiotic metabolic process"/>
    <property type="evidence" value="ECO:0000304"/>
    <property type="project" value="MGI"/>
</dbReference>
<dbReference type="CDD" id="cd19108">
    <property type="entry name" value="AKR_AKR1C1-35"/>
    <property type="match status" value="1"/>
</dbReference>
<dbReference type="FunFam" id="3.20.20.100:FF:000003">
    <property type="entry name" value="Aldo-keto reductase family 1 member C3"/>
    <property type="match status" value="1"/>
</dbReference>
<dbReference type="Gene3D" id="3.20.20.100">
    <property type="entry name" value="NADP-dependent oxidoreductase domain"/>
    <property type="match status" value="1"/>
</dbReference>
<dbReference type="InterPro" id="IPR020471">
    <property type="entry name" value="AKR"/>
</dbReference>
<dbReference type="InterPro" id="IPR044482">
    <property type="entry name" value="AKR1C"/>
</dbReference>
<dbReference type="InterPro" id="IPR018170">
    <property type="entry name" value="Aldo/ket_reductase_CS"/>
</dbReference>
<dbReference type="InterPro" id="IPR023210">
    <property type="entry name" value="NADP_OxRdtase_dom"/>
</dbReference>
<dbReference type="InterPro" id="IPR036812">
    <property type="entry name" value="NADP_OxRdtase_dom_sf"/>
</dbReference>
<dbReference type="PANTHER" id="PTHR11732">
    <property type="entry name" value="ALDO/KETO REDUCTASE"/>
    <property type="match status" value="1"/>
</dbReference>
<dbReference type="Pfam" id="PF00248">
    <property type="entry name" value="Aldo_ket_red"/>
    <property type="match status" value="1"/>
</dbReference>
<dbReference type="PIRSF" id="PIRSF000097">
    <property type="entry name" value="AKR"/>
    <property type="match status" value="1"/>
</dbReference>
<dbReference type="PRINTS" id="PR00069">
    <property type="entry name" value="ALDKETRDTASE"/>
</dbReference>
<dbReference type="SUPFAM" id="SSF51430">
    <property type="entry name" value="NAD(P)-linked oxidoreductase"/>
    <property type="match status" value="1"/>
</dbReference>
<dbReference type="PROSITE" id="PS00798">
    <property type="entry name" value="ALDOKETO_REDUCTASE_1"/>
    <property type="match status" value="1"/>
</dbReference>
<dbReference type="PROSITE" id="PS00062">
    <property type="entry name" value="ALDOKETO_REDUCTASE_2"/>
    <property type="match status" value="1"/>
</dbReference>
<accession>Q8VC28</accession>
<accession>Q9D7R9</accession>
<accession>Q9R0M9</accession>
<gene>
    <name type="primary">Akr1c13</name>
</gene>
<protein>
    <recommendedName>
        <fullName>Aldo-keto reductase family 1 member C13</fullName>
        <ecNumber>1.1.1.-</ecNumber>
    </recommendedName>
</protein>
<feature type="chain" id="PRO_0000124644" description="Aldo-keto reductase family 1 member C13">
    <location>
        <begin position="1"/>
        <end position="323"/>
    </location>
</feature>
<feature type="active site" description="Proton donor" evidence="1">
    <location>
        <position position="55"/>
    </location>
</feature>
<feature type="binding site" evidence="2">
    <location>
        <begin position="20"/>
        <end position="24"/>
    </location>
    <ligand>
        <name>NAD(+)</name>
        <dbReference type="ChEBI" id="CHEBI:57540"/>
    </ligand>
</feature>
<feature type="binding site" evidence="2">
    <location>
        <position position="50"/>
    </location>
    <ligand>
        <name>NAD(+)</name>
        <dbReference type="ChEBI" id="CHEBI:57540"/>
    </ligand>
</feature>
<feature type="binding site" evidence="2">
    <location>
        <position position="55"/>
    </location>
    <ligand>
        <name>NAD(+)</name>
        <dbReference type="ChEBI" id="CHEBI:57540"/>
    </ligand>
</feature>
<feature type="binding site" evidence="1">
    <location>
        <position position="117"/>
    </location>
    <ligand>
        <name>substrate</name>
    </ligand>
</feature>
<feature type="binding site" evidence="2">
    <location>
        <begin position="166"/>
        <end position="167"/>
    </location>
    <ligand>
        <name>NAD(+)</name>
        <dbReference type="ChEBI" id="CHEBI:57540"/>
    </ligand>
</feature>
<feature type="binding site" evidence="2">
    <location>
        <position position="190"/>
    </location>
    <ligand>
        <name>NAD(+)</name>
        <dbReference type="ChEBI" id="CHEBI:57540"/>
    </ligand>
</feature>
<feature type="binding site" evidence="2">
    <location>
        <begin position="216"/>
        <end position="224"/>
    </location>
    <ligand>
        <name>NAD(+)</name>
        <dbReference type="ChEBI" id="CHEBI:57540"/>
    </ligand>
</feature>
<feature type="binding site" evidence="2">
    <location>
        <begin position="270"/>
        <end position="280"/>
    </location>
    <ligand>
        <name>NAD(+)</name>
        <dbReference type="ChEBI" id="CHEBI:57540"/>
    </ligand>
</feature>
<feature type="site" description="Lowers pKa of active site Tyr" evidence="1">
    <location>
        <position position="84"/>
    </location>
</feature>
<feature type="sequence conflict" description="In Ref. 1; BAA86850." evidence="3" ref="1">
    <original>R</original>
    <variation>L</variation>
    <location>
        <position position="47"/>
    </location>
</feature>
<feature type="sequence conflict" description="In Ref. 3; AAH21937." evidence="3" ref="3">
    <original>I</original>
    <variation>V</variation>
    <location>
        <position position="81"/>
    </location>
</feature>
<feature type="sequence conflict" description="In Ref. 2; BAB25986." evidence="3" ref="2">
    <original>K</original>
    <variation>N</variation>
    <location>
        <position position="183"/>
    </location>
</feature>
<feature type="sequence conflict" description="In Ref. 1; BAA86850." evidence="3" ref="1">
    <original>E</original>
    <variation>K</variation>
    <location>
        <position position="226"/>
    </location>
</feature>
<feature type="turn" evidence="4">
    <location>
        <begin position="3"/>
        <end position="5"/>
    </location>
</feature>
<feature type="strand" evidence="5">
    <location>
        <begin position="7"/>
        <end position="9"/>
    </location>
</feature>
<feature type="strand" evidence="5">
    <location>
        <begin position="15"/>
        <end position="22"/>
    </location>
</feature>
<feature type="helix" evidence="5">
    <location>
        <begin position="31"/>
        <end position="44"/>
    </location>
</feature>
<feature type="strand" evidence="5">
    <location>
        <begin position="48"/>
        <end position="50"/>
    </location>
</feature>
<feature type="helix" evidence="5">
    <location>
        <begin position="53"/>
        <end position="55"/>
    </location>
</feature>
<feature type="helix" evidence="5">
    <location>
        <begin position="58"/>
        <end position="70"/>
    </location>
</feature>
<feature type="helix" evidence="5">
    <location>
        <begin position="76"/>
        <end position="78"/>
    </location>
</feature>
<feature type="strand" evidence="5">
    <location>
        <begin position="80"/>
        <end position="85"/>
    </location>
</feature>
<feature type="helix" evidence="5">
    <location>
        <begin position="87"/>
        <end position="89"/>
    </location>
</feature>
<feature type="helix" evidence="5">
    <location>
        <begin position="92"/>
        <end position="94"/>
    </location>
</feature>
<feature type="helix" evidence="5">
    <location>
        <begin position="95"/>
        <end position="106"/>
    </location>
</feature>
<feature type="strand" evidence="5">
    <location>
        <begin position="111"/>
        <end position="117"/>
    </location>
</feature>
<feature type="helix" evidence="5">
    <location>
        <begin position="144"/>
        <end position="156"/>
    </location>
</feature>
<feature type="strand" evidence="5">
    <location>
        <begin position="159"/>
        <end position="167"/>
    </location>
</feature>
<feature type="helix" evidence="5">
    <location>
        <begin position="170"/>
        <end position="177"/>
    </location>
</feature>
<feature type="strand" evidence="5">
    <location>
        <begin position="187"/>
        <end position="192"/>
    </location>
</feature>
<feature type="helix" evidence="5">
    <location>
        <begin position="200"/>
        <end position="208"/>
    </location>
</feature>
<feature type="strand" evidence="5">
    <location>
        <begin position="212"/>
        <end position="217"/>
    </location>
</feature>
<feature type="helix" evidence="5">
    <location>
        <begin position="224"/>
        <end position="228"/>
    </location>
</feature>
<feature type="helix" evidence="5">
    <location>
        <begin position="235"/>
        <end position="237"/>
    </location>
</feature>
<feature type="helix" evidence="5">
    <location>
        <begin position="239"/>
        <end position="248"/>
    </location>
</feature>
<feature type="helix" evidence="5">
    <location>
        <begin position="252"/>
        <end position="262"/>
    </location>
</feature>
<feature type="strand" evidence="5">
    <location>
        <begin position="266"/>
        <end position="269"/>
    </location>
</feature>
<feature type="helix" evidence="5">
    <location>
        <begin position="274"/>
        <end position="281"/>
    </location>
</feature>
<feature type="helix" evidence="5">
    <location>
        <begin position="282"/>
        <end position="285"/>
    </location>
</feature>
<feature type="helix" evidence="5">
    <location>
        <begin position="290"/>
        <end position="297"/>
    </location>
</feature>
<feature type="helix" evidence="5">
    <location>
        <begin position="309"/>
        <end position="311"/>
    </location>
</feature>
<comment type="function">
    <text evidence="1">Catalyzes the dehydrogenation of 17-beta-hydroxysteroids. May also exhibit significant activity with a variety of cyclic and alicyclic alcohols. Uses both NAD and NADP, but the activity is much greater with NAD than with NADP (By similarity).</text>
</comment>
<comment type="similarity">
    <text evidence="3">Belongs to the aldo/keto reductase family.</text>
</comment>
<keyword id="KW-0002">3D-structure</keyword>
<keyword id="KW-0903">Direct protein sequencing</keyword>
<keyword id="KW-0520">NAD</keyword>
<keyword id="KW-0521">NADP</keyword>
<keyword id="KW-0560">Oxidoreductase</keyword>
<keyword id="KW-1185">Reference proteome</keyword>
<organism>
    <name type="scientific">Mus musculus</name>
    <name type="common">Mouse</name>
    <dbReference type="NCBI Taxonomy" id="10090"/>
    <lineage>
        <taxon>Eukaryota</taxon>
        <taxon>Metazoa</taxon>
        <taxon>Chordata</taxon>
        <taxon>Craniata</taxon>
        <taxon>Vertebrata</taxon>
        <taxon>Euteleostomi</taxon>
        <taxon>Mammalia</taxon>
        <taxon>Eutheria</taxon>
        <taxon>Euarchontoglires</taxon>
        <taxon>Glires</taxon>
        <taxon>Rodentia</taxon>
        <taxon>Myomorpha</taxon>
        <taxon>Muroidea</taxon>
        <taxon>Muridae</taxon>
        <taxon>Murinae</taxon>
        <taxon>Mus</taxon>
        <taxon>Mus</taxon>
    </lineage>
</organism>
<name>AK1CD_MOUSE</name>
<reference key="1">
    <citation type="journal article" date="1999" name="FEBS Lett.">
        <title>Cloning and characterization of two novel aldo-keto reductases (AKR1C12 and AKR1C13) from mouse stomach.</title>
        <authorList>
            <person name="Ikeda S."/>
            <person name="Okuda-Ashitaka E."/>
            <person name="Masu Y."/>
            <person name="Suzuki T."/>
            <person name="Watanabe K."/>
            <person name="Nakao M."/>
            <person name="Shingu K."/>
            <person name="Ito S."/>
        </authorList>
    </citation>
    <scope>NUCLEOTIDE SEQUENCE [MRNA]</scope>
    <source>
        <tissue>Stomach</tissue>
    </source>
</reference>
<reference key="2">
    <citation type="journal article" date="2005" name="Science">
        <title>The transcriptional landscape of the mammalian genome.</title>
        <authorList>
            <person name="Carninci P."/>
            <person name="Kasukawa T."/>
            <person name="Katayama S."/>
            <person name="Gough J."/>
            <person name="Frith M.C."/>
            <person name="Maeda N."/>
            <person name="Oyama R."/>
            <person name="Ravasi T."/>
            <person name="Lenhard B."/>
            <person name="Wells C."/>
            <person name="Kodzius R."/>
            <person name="Shimokawa K."/>
            <person name="Bajic V.B."/>
            <person name="Brenner S.E."/>
            <person name="Batalov S."/>
            <person name="Forrest A.R."/>
            <person name="Zavolan M."/>
            <person name="Davis M.J."/>
            <person name="Wilming L.G."/>
            <person name="Aidinis V."/>
            <person name="Allen J.E."/>
            <person name="Ambesi-Impiombato A."/>
            <person name="Apweiler R."/>
            <person name="Aturaliya R.N."/>
            <person name="Bailey T.L."/>
            <person name="Bansal M."/>
            <person name="Baxter L."/>
            <person name="Beisel K.W."/>
            <person name="Bersano T."/>
            <person name="Bono H."/>
            <person name="Chalk A.M."/>
            <person name="Chiu K.P."/>
            <person name="Choudhary V."/>
            <person name="Christoffels A."/>
            <person name="Clutterbuck D.R."/>
            <person name="Crowe M.L."/>
            <person name="Dalla E."/>
            <person name="Dalrymple B.P."/>
            <person name="de Bono B."/>
            <person name="Della Gatta G."/>
            <person name="di Bernardo D."/>
            <person name="Down T."/>
            <person name="Engstrom P."/>
            <person name="Fagiolini M."/>
            <person name="Faulkner G."/>
            <person name="Fletcher C.F."/>
            <person name="Fukushima T."/>
            <person name="Furuno M."/>
            <person name="Futaki S."/>
            <person name="Gariboldi M."/>
            <person name="Georgii-Hemming P."/>
            <person name="Gingeras T.R."/>
            <person name="Gojobori T."/>
            <person name="Green R.E."/>
            <person name="Gustincich S."/>
            <person name="Harbers M."/>
            <person name="Hayashi Y."/>
            <person name="Hensch T.K."/>
            <person name="Hirokawa N."/>
            <person name="Hill D."/>
            <person name="Huminiecki L."/>
            <person name="Iacono M."/>
            <person name="Ikeo K."/>
            <person name="Iwama A."/>
            <person name="Ishikawa T."/>
            <person name="Jakt M."/>
            <person name="Kanapin A."/>
            <person name="Katoh M."/>
            <person name="Kawasawa Y."/>
            <person name="Kelso J."/>
            <person name="Kitamura H."/>
            <person name="Kitano H."/>
            <person name="Kollias G."/>
            <person name="Krishnan S.P."/>
            <person name="Kruger A."/>
            <person name="Kummerfeld S.K."/>
            <person name="Kurochkin I.V."/>
            <person name="Lareau L.F."/>
            <person name="Lazarevic D."/>
            <person name="Lipovich L."/>
            <person name="Liu J."/>
            <person name="Liuni S."/>
            <person name="McWilliam S."/>
            <person name="Madan Babu M."/>
            <person name="Madera M."/>
            <person name="Marchionni L."/>
            <person name="Matsuda H."/>
            <person name="Matsuzawa S."/>
            <person name="Miki H."/>
            <person name="Mignone F."/>
            <person name="Miyake S."/>
            <person name="Morris K."/>
            <person name="Mottagui-Tabar S."/>
            <person name="Mulder N."/>
            <person name="Nakano N."/>
            <person name="Nakauchi H."/>
            <person name="Ng P."/>
            <person name="Nilsson R."/>
            <person name="Nishiguchi S."/>
            <person name="Nishikawa S."/>
            <person name="Nori F."/>
            <person name="Ohara O."/>
            <person name="Okazaki Y."/>
            <person name="Orlando V."/>
            <person name="Pang K.C."/>
            <person name="Pavan W.J."/>
            <person name="Pavesi G."/>
            <person name="Pesole G."/>
            <person name="Petrovsky N."/>
            <person name="Piazza S."/>
            <person name="Reed J."/>
            <person name="Reid J.F."/>
            <person name="Ring B.Z."/>
            <person name="Ringwald M."/>
            <person name="Rost B."/>
            <person name="Ruan Y."/>
            <person name="Salzberg S.L."/>
            <person name="Sandelin A."/>
            <person name="Schneider C."/>
            <person name="Schoenbach C."/>
            <person name="Sekiguchi K."/>
            <person name="Semple C.A."/>
            <person name="Seno S."/>
            <person name="Sessa L."/>
            <person name="Sheng Y."/>
            <person name="Shibata Y."/>
            <person name="Shimada H."/>
            <person name="Shimada K."/>
            <person name="Silva D."/>
            <person name="Sinclair B."/>
            <person name="Sperling S."/>
            <person name="Stupka E."/>
            <person name="Sugiura K."/>
            <person name="Sultana R."/>
            <person name="Takenaka Y."/>
            <person name="Taki K."/>
            <person name="Tammoja K."/>
            <person name="Tan S.L."/>
            <person name="Tang S."/>
            <person name="Taylor M.S."/>
            <person name="Tegner J."/>
            <person name="Teichmann S.A."/>
            <person name="Ueda H.R."/>
            <person name="van Nimwegen E."/>
            <person name="Verardo R."/>
            <person name="Wei C.L."/>
            <person name="Yagi K."/>
            <person name="Yamanishi H."/>
            <person name="Zabarovsky E."/>
            <person name="Zhu S."/>
            <person name="Zimmer A."/>
            <person name="Hide W."/>
            <person name="Bult C."/>
            <person name="Grimmond S.M."/>
            <person name="Teasdale R.D."/>
            <person name="Liu E.T."/>
            <person name="Brusic V."/>
            <person name="Quackenbush J."/>
            <person name="Wahlestedt C."/>
            <person name="Mattick J.S."/>
            <person name="Hume D.A."/>
            <person name="Kai C."/>
            <person name="Sasaki D."/>
            <person name="Tomaru Y."/>
            <person name="Fukuda S."/>
            <person name="Kanamori-Katayama M."/>
            <person name="Suzuki M."/>
            <person name="Aoki J."/>
            <person name="Arakawa T."/>
            <person name="Iida J."/>
            <person name="Imamura K."/>
            <person name="Itoh M."/>
            <person name="Kato T."/>
            <person name="Kawaji H."/>
            <person name="Kawagashira N."/>
            <person name="Kawashima T."/>
            <person name="Kojima M."/>
            <person name="Kondo S."/>
            <person name="Konno H."/>
            <person name="Nakano K."/>
            <person name="Ninomiya N."/>
            <person name="Nishio T."/>
            <person name="Okada M."/>
            <person name="Plessy C."/>
            <person name="Shibata K."/>
            <person name="Shiraki T."/>
            <person name="Suzuki S."/>
            <person name="Tagami M."/>
            <person name="Waki K."/>
            <person name="Watahiki A."/>
            <person name="Okamura-Oho Y."/>
            <person name="Suzuki H."/>
            <person name="Kawai J."/>
            <person name="Hayashizaki Y."/>
        </authorList>
    </citation>
    <scope>NUCLEOTIDE SEQUENCE [LARGE SCALE MRNA]</scope>
    <source>
        <strain>C57BL/6J</strain>
        <tissue>Stomach</tissue>
    </source>
</reference>
<reference key="3">
    <citation type="journal article" date="2004" name="Genome Res.">
        <title>The status, quality, and expansion of the NIH full-length cDNA project: the Mammalian Gene Collection (MGC).</title>
        <authorList>
            <consortium name="The MGC Project Team"/>
        </authorList>
    </citation>
    <scope>NUCLEOTIDE SEQUENCE [LARGE SCALE MRNA]</scope>
    <source>
        <tissue>Liver</tissue>
    </source>
</reference>
<reference key="4">
    <citation type="submission" date="2007-04" db="UniProtKB">
        <authorList>
            <person name="Lubec G."/>
            <person name="Kang S.U."/>
        </authorList>
    </citation>
    <scope>PROTEIN SEQUENCE OF 201-209</scope>
    <scope>IDENTIFICATION BY MASS SPECTROMETRY</scope>
    <source>
        <strain>C57BL/6J</strain>
        <tissue>Brain</tissue>
    </source>
</reference>
<reference key="5">
    <citation type="journal article" date="2010" name="Cell">
        <title>A tissue-specific atlas of mouse protein phosphorylation and expression.</title>
        <authorList>
            <person name="Huttlin E.L."/>
            <person name="Jedrychowski M.P."/>
            <person name="Elias J.E."/>
            <person name="Goswami T."/>
            <person name="Rad R."/>
            <person name="Beausoleil S.A."/>
            <person name="Villen J."/>
            <person name="Haas W."/>
            <person name="Sowa M.E."/>
            <person name="Gygi S.P."/>
        </authorList>
    </citation>
    <scope>IDENTIFICATION BY MASS SPECTROMETRY [LARGE SCALE ANALYSIS]</scope>
    <source>
        <tissue>Kidney</tissue>
        <tissue>Liver</tissue>
        <tissue>Lung</tissue>
        <tissue>Pancreas</tissue>
        <tissue>Spleen</tissue>
    </source>
</reference>
<reference key="6">
    <citation type="submission" date="2010-02" db="PDB data bank">
        <title>Crystal structure of putative reductase (NP_038806.2) from Mus musculus at 1.18 A resolution.</title>
        <authorList>
            <consortium name="Joint center for structural genomics (JCSG)"/>
        </authorList>
    </citation>
    <scope>X-RAY CRYSTALLOGRAPHY (1.18 ANGSTROMS) IN COMPLEX WITH NAD</scope>
</reference>